<feature type="chain" id="PRO_0000185641" description="Threonine synthase">
    <location>
        <begin position="1"/>
        <end position="382"/>
    </location>
</feature>
<feature type="binding site" evidence="1">
    <location>
        <position position="119"/>
    </location>
    <ligand>
        <name>pyridoxal 5'-phosphate</name>
        <dbReference type="ChEBI" id="CHEBI:597326"/>
    </ligand>
</feature>
<feature type="binding site" evidence="1">
    <location>
        <begin position="219"/>
        <end position="223"/>
    </location>
    <ligand>
        <name>pyridoxal 5'-phosphate</name>
        <dbReference type="ChEBI" id="CHEBI:597326"/>
    </ligand>
</feature>
<feature type="binding site" evidence="1">
    <location>
        <position position="347"/>
    </location>
    <ligand>
        <name>pyridoxal 5'-phosphate</name>
        <dbReference type="ChEBI" id="CHEBI:597326"/>
    </ligand>
</feature>
<feature type="modified residue" description="N6-(pyridoxal phosphate)lysine" evidence="1">
    <location>
        <position position="93"/>
    </location>
</feature>
<name>THRC_SYNY3</name>
<dbReference type="EC" id="4.2.3.1"/>
<dbReference type="EMBL" id="BA000022">
    <property type="protein sequence ID" value="BAA18282.1"/>
    <property type="molecule type" value="Genomic_DNA"/>
</dbReference>
<dbReference type="PIR" id="S75823">
    <property type="entry name" value="S75823"/>
</dbReference>
<dbReference type="SMR" id="P74193"/>
<dbReference type="FunCoup" id="P74193">
    <property type="interactions" value="179"/>
</dbReference>
<dbReference type="IntAct" id="P74193">
    <property type="interactions" value="1"/>
</dbReference>
<dbReference type="STRING" id="1148.gene:10499158"/>
<dbReference type="PaxDb" id="1148-1653368"/>
<dbReference type="EnsemblBacteria" id="BAA18282">
    <property type="protein sequence ID" value="BAA18282"/>
    <property type="gene ID" value="BAA18282"/>
</dbReference>
<dbReference type="KEGG" id="syn:sll1172"/>
<dbReference type="eggNOG" id="COG0498">
    <property type="taxonomic scope" value="Bacteria"/>
</dbReference>
<dbReference type="InParanoid" id="P74193"/>
<dbReference type="PhylomeDB" id="P74193"/>
<dbReference type="UniPathway" id="UPA00050">
    <property type="reaction ID" value="UER00065"/>
</dbReference>
<dbReference type="Proteomes" id="UP000001425">
    <property type="component" value="Chromosome"/>
</dbReference>
<dbReference type="GO" id="GO:0005737">
    <property type="term" value="C:cytoplasm"/>
    <property type="evidence" value="ECO:0000318"/>
    <property type="project" value="GO_Central"/>
</dbReference>
<dbReference type="GO" id="GO:0030170">
    <property type="term" value="F:pyridoxal phosphate binding"/>
    <property type="evidence" value="ECO:0007669"/>
    <property type="project" value="InterPro"/>
</dbReference>
<dbReference type="GO" id="GO:0004795">
    <property type="term" value="F:threonine synthase activity"/>
    <property type="evidence" value="ECO:0000318"/>
    <property type="project" value="GO_Central"/>
</dbReference>
<dbReference type="GO" id="GO:0019344">
    <property type="term" value="P:cysteine biosynthetic process"/>
    <property type="evidence" value="ECO:0000318"/>
    <property type="project" value="GO_Central"/>
</dbReference>
<dbReference type="GO" id="GO:0009088">
    <property type="term" value="P:threonine biosynthetic process"/>
    <property type="evidence" value="ECO:0007669"/>
    <property type="project" value="UniProtKB-UniPathway"/>
</dbReference>
<dbReference type="CDD" id="cd01563">
    <property type="entry name" value="Thr-synth_1"/>
    <property type="match status" value="1"/>
</dbReference>
<dbReference type="FunFam" id="3.40.50.1100:FF:000013">
    <property type="entry name" value="Threonine synthase"/>
    <property type="match status" value="1"/>
</dbReference>
<dbReference type="FunFam" id="3.40.50.1100:FF:000014">
    <property type="entry name" value="Threonine synthase"/>
    <property type="match status" value="1"/>
</dbReference>
<dbReference type="Gene3D" id="3.40.50.1100">
    <property type="match status" value="2"/>
</dbReference>
<dbReference type="InterPro" id="IPR001763">
    <property type="entry name" value="Rhodanese-like_dom"/>
</dbReference>
<dbReference type="InterPro" id="IPR050147">
    <property type="entry name" value="Ser/Thr_Dehydratase"/>
</dbReference>
<dbReference type="InterPro" id="IPR000634">
    <property type="entry name" value="Ser/Thr_deHydtase_PyrdxlP-BS"/>
</dbReference>
<dbReference type="InterPro" id="IPR004450">
    <property type="entry name" value="Thr_synthase-like"/>
</dbReference>
<dbReference type="InterPro" id="IPR026260">
    <property type="entry name" value="Thr_Synthase_bac/arc"/>
</dbReference>
<dbReference type="InterPro" id="IPR001926">
    <property type="entry name" value="TrpB-like_PALP"/>
</dbReference>
<dbReference type="InterPro" id="IPR036052">
    <property type="entry name" value="TrpB-like_PALP_sf"/>
</dbReference>
<dbReference type="NCBIfam" id="TIGR00260">
    <property type="entry name" value="thrC"/>
    <property type="match status" value="1"/>
</dbReference>
<dbReference type="PANTHER" id="PTHR48078:SF6">
    <property type="entry name" value="L-THREONINE DEHYDRATASE CATABOLIC TDCB"/>
    <property type="match status" value="1"/>
</dbReference>
<dbReference type="PANTHER" id="PTHR48078">
    <property type="entry name" value="THREONINE DEHYDRATASE, MITOCHONDRIAL-RELATED"/>
    <property type="match status" value="1"/>
</dbReference>
<dbReference type="Pfam" id="PF00291">
    <property type="entry name" value="PALP"/>
    <property type="match status" value="1"/>
</dbReference>
<dbReference type="PIRSF" id="PIRSF038945">
    <property type="entry name" value="Thr_synthase"/>
    <property type="match status" value="1"/>
</dbReference>
<dbReference type="SUPFAM" id="SSF53686">
    <property type="entry name" value="Tryptophan synthase beta subunit-like PLP-dependent enzymes"/>
    <property type="match status" value="1"/>
</dbReference>
<dbReference type="PROSITE" id="PS00165">
    <property type="entry name" value="DEHYDRATASE_SER_THR"/>
    <property type="match status" value="1"/>
</dbReference>
<comment type="function">
    <text evidence="1">Catalyzes the gamma-elimination of phosphate from L-phosphohomoserine and the beta-addition of water to produce L-threonine.</text>
</comment>
<comment type="catalytic activity">
    <reaction>
        <text>O-phospho-L-homoserine + H2O = L-threonine + phosphate</text>
        <dbReference type="Rhea" id="RHEA:10840"/>
        <dbReference type="ChEBI" id="CHEBI:15377"/>
        <dbReference type="ChEBI" id="CHEBI:43474"/>
        <dbReference type="ChEBI" id="CHEBI:57590"/>
        <dbReference type="ChEBI" id="CHEBI:57926"/>
        <dbReference type="EC" id="4.2.3.1"/>
    </reaction>
</comment>
<comment type="cofactor">
    <cofactor evidence="1">
        <name>pyridoxal 5'-phosphate</name>
        <dbReference type="ChEBI" id="CHEBI:597326"/>
    </cofactor>
</comment>
<comment type="pathway">
    <text>Amino-acid biosynthesis; L-threonine biosynthesis; L-threonine from L-aspartate: step 5/5.</text>
</comment>
<comment type="similarity">
    <text evidence="2">Belongs to the threonine synthase family.</text>
</comment>
<gene>
    <name type="primary">thrC</name>
    <name type="ordered locus">sll1172</name>
</gene>
<reference key="1">
    <citation type="journal article" date="1996" name="DNA Res.">
        <title>Sequence analysis of the genome of the unicellular cyanobacterium Synechocystis sp. strain PCC6803. II. Sequence determination of the entire genome and assignment of potential protein-coding regions.</title>
        <authorList>
            <person name="Kaneko T."/>
            <person name="Sato S."/>
            <person name="Kotani H."/>
            <person name="Tanaka A."/>
            <person name="Asamizu E."/>
            <person name="Nakamura Y."/>
            <person name="Miyajima N."/>
            <person name="Hirosawa M."/>
            <person name="Sugiura M."/>
            <person name="Sasamoto S."/>
            <person name="Kimura T."/>
            <person name="Hosouchi T."/>
            <person name="Matsuno A."/>
            <person name="Muraki A."/>
            <person name="Nakazaki N."/>
            <person name="Naruo K."/>
            <person name="Okumura S."/>
            <person name="Shimpo S."/>
            <person name="Takeuchi C."/>
            <person name="Wada T."/>
            <person name="Watanabe A."/>
            <person name="Yamada M."/>
            <person name="Yasuda M."/>
            <person name="Tabata S."/>
        </authorList>
    </citation>
    <scope>NUCLEOTIDE SEQUENCE [LARGE SCALE GENOMIC DNA]</scope>
    <source>
        <strain>ATCC 27184 / PCC 6803 / Kazusa</strain>
    </source>
</reference>
<proteinExistence type="inferred from homology"/>
<evidence type="ECO:0000250" key="1"/>
<evidence type="ECO:0000305" key="2"/>
<protein>
    <recommendedName>
        <fullName>Threonine synthase</fullName>
        <shortName>TS</shortName>
        <ecNumber>4.2.3.1</ecNumber>
    </recommendedName>
</protein>
<keyword id="KW-0028">Amino-acid biosynthesis</keyword>
<keyword id="KW-0456">Lyase</keyword>
<keyword id="KW-0663">Pyridoxal phosphate</keyword>
<keyword id="KW-1185">Reference proteome</keyword>
<keyword id="KW-0791">Threonine biosynthesis</keyword>
<accession>P74193</accession>
<organism>
    <name type="scientific">Synechocystis sp. (strain ATCC 27184 / PCC 6803 / Kazusa)</name>
    <dbReference type="NCBI Taxonomy" id="1111708"/>
    <lineage>
        <taxon>Bacteria</taxon>
        <taxon>Bacillati</taxon>
        <taxon>Cyanobacteriota</taxon>
        <taxon>Cyanophyceae</taxon>
        <taxon>Synechococcales</taxon>
        <taxon>Merismopediaceae</taxon>
        <taxon>Synechocystis</taxon>
    </lineage>
</organism>
<sequence length="382" mass="40414">MISCHSFTMTPSAPNSTVLPSATPVCPQSSACRWRGLIETYRPYLPVSDQTPVVTLLEGNTPLIPAPAIAKRIGKDVRVFVKYDGLNPTGSFKDRGMTMAISKAKEAGAKAVICASTGNTSAAAAAYARRAGLRAFVIIPDGYVALGKLGQALIYGAEVIAIDGNFDDALTTVRQLSEHYPVTLVNSVNPYRLEGQKTAAFEIVDVLGQAPDWLCIPVGNAGNITAYWMGFCQYKELGKGDRLPRMMGFQAAGSAPFIQGQPISHPETLATAIRIGNPANWDKAWAASRESNGEFHPVTDAEILEAYRILAAEEGVFCEPASAASVAGLLKQKDQVPAGATVVCVLTGNGLKDPDCAVQNSGNQVKAGLKPDLEIVAKAMGF</sequence>